<evidence type="ECO:0000255" key="1">
    <source>
        <dbReference type="HAMAP-Rule" id="MF_00135"/>
    </source>
</evidence>
<name>TRPF_METAR</name>
<comment type="catalytic activity">
    <reaction evidence="1">
        <text>N-(5-phospho-beta-D-ribosyl)anthranilate = 1-(2-carboxyphenylamino)-1-deoxy-D-ribulose 5-phosphate</text>
        <dbReference type="Rhea" id="RHEA:21540"/>
        <dbReference type="ChEBI" id="CHEBI:18277"/>
        <dbReference type="ChEBI" id="CHEBI:58613"/>
        <dbReference type="EC" id="5.3.1.24"/>
    </reaction>
</comment>
<comment type="pathway">
    <text evidence="1">Amino-acid biosynthesis; L-tryptophan biosynthesis; L-tryptophan from chorismate: step 3/5.</text>
</comment>
<comment type="similarity">
    <text evidence="1">Belongs to the TrpF family.</text>
</comment>
<gene>
    <name evidence="1" type="primary">trpF</name>
    <name type="ordered locus">UNCMA_20230</name>
    <name type="ORF">RCIX795</name>
</gene>
<protein>
    <recommendedName>
        <fullName evidence="1">N-(5'-phosphoribosyl)anthranilate isomerase</fullName>
        <shortName evidence="1">PRAI</shortName>
        <ecNumber evidence="1">5.3.1.24</ecNumber>
    </recommendedName>
</protein>
<dbReference type="EC" id="5.3.1.24" evidence="1"/>
<dbReference type="EMBL" id="AM114193">
    <property type="protein sequence ID" value="CAJ36165.1"/>
    <property type="molecule type" value="Genomic_DNA"/>
</dbReference>
<dbReference type="RefSeq" id="WP_012036346.1">
    <property type="nucleotide sequence ID" value="NC_009464.1"/>
</dbReference>
<dbReference type="SMR" id="Q0W628"/>
<dbReference type="STRING" id="351160.RCIX795"/>
<dbReference type="GeneID" id="5145424"/>
<dbReference type="KEGG" id="rci:RCIX795"/>
<dbReference type="PATRIC" id="fig|351160.9.peg.2076"/>
<dbReference type="eggNOG" id="arCOG01983">
    <property type="taxonomic scope" value="Archaea"/>
</dbReference>
<dbReference type="OrthoDB" id="27513at2157"/>
<dbReference type="UniPathway" id="UPA00035">
    <property type="reaction ID" value="UER00042"/>
</dbReference>
<dbReference type="Proteomes" id="UP000000663">
    <property type="component" value="Chromosome"/>
</dbReference>
<dbReference type="GO" id="GO:0004640">
    <property type="term" value="F:phosphoribosylanthranilate isomerase activity"/>
    <property type="evidence" value="ECO:0007669"/>
    <property type="project" value="UniProtKB-UniRule"/>
</dbReference>
<dbReference type="GO" id="GO:0000162">
    <property type="term" value="P:L-tryptophan biosynthetic process"/>
    <property type="evidence" value="ECO:0007669"/>
    <property type="project" value="UniProtKB-UniRule"/>
</dbReference>
<dbReference type="CDD" id="cd00405">
    <property type="entry name" value="PRAI"/>
    <property type="match status" value="1"/>
</dbReference>
<dbReference type="Gene3D" id="3.20.20.70">
    <property type="entry name" value="Aldolase class I"/>
    <property type="match status" value="1"/>
</dbReference>
<dbReference type="HAMAP" id="MF_00135">
    <property type="entry name" value="PRAI"/>
    <property type="match status" value="1"/>
</dbReference>
<dbReference type="InterPro" id="IPR013785">
    <property type="entry name" value="Aldolase_TIM"/>
</dbReference>
<dbReference type="InterPro" id="IPR001240">
    <property type="entry name" value="PRAI_dom"/>
</dbReference>
<dbReference type="InterPro" id="IPR011060">
    <property type="entry name" value="RibuloseP-bd_barrel"/>
</dbReference>
<dbReference type="InterPro" id="IPR044643">
    <property type="entry name" value="TrpF_fam"/>
</dbReference>
<dbReference type="PANTHER" id="PTHR42894">
    <property type="entry name" value="N-(5'-PHOSPHORIBOSYL)ANTHRANILATE ISOMERASE"/>
    <property type="match status" value="1"/>
</dbReference>
<dbReference type="PANTHER" id="PTHR42894:SF1">
    <property type="entry name" value="N-(5'-PHOSPHORIBOSYL)ANTHRANILATE ISOMERASE"/>
    <property type="match status" value="1"/>
</dbReference>
<dbReference type="Pfam" id="PF00697">
    <property type="entry name" value="PRAI"/>
    <property type="match status" value="1"/>
</dbReference>
<dbReference type="SUPFAM" id="SSF51366">
    <property type="entry name" value="Ribulose-phoshate binding barrel"/>
    <property type="match status" value="1"/>
</dbReference>
<accession>Q0W628</accession>
<reference key="1">
    <citation type="journal article" date="2006" name="Science">
        <title>Genome of rice cluster I archaea -- the key methane producers in the rice rhizosphere.</title>
        <authorList>
            <person name="Erkel C."/>
            <person name="Kube M."/>
            <person name="Reinhardt R."/>
            <person name="Liesack W."/>
        </authorList>
    </citation>
    <scope>NUCLEOTIDE SEQUENCE [LARGE SCALE GENOMIC DNA]</scope>
    <source>
        <strain>DSM 22066 / NBRC 105507 / MRE50</strain>
    </source>
</reference>
<organism>
    <name type="scientific">Methanocella arvoryzae (strain DSM 22066 / NBRC 105507 / MRE50)</name>
    <dbReference type="NCBI Taxonomy" id="351160"/>
    <lineage>
        <taxon>Archaea</taxon>
        <taxon>Methanobacteriati</taxon>
        <taxon>Methanobacteriota</taxon>
        <taxon>Stenosarchaea group</taxon>
        <taxon>Methanomicrobia</taxon>
        <taxon>Methanocellales</taxon>
        <taxon>Methanocellaceae</taxon>
        <taxon>Methanocella</taxon>
    </lineage>
</organism>
<proteinExistence type="inferred from homology"/>
<sequence>MTRVKICGTTTPEDALACAVSGADAIGMLVDVRISPRCITADQARLITSVLPPFVASVIVMQPSTPGEVVDAVRKIRPTAVQLHGSEPPDFLKHIKLQVPGVRLIKTIHVGEGGEIEKARQYEGVADAILLDTASARGGGMGITHDWNVSREIIGSVRLPVILAGGLSPKNVAEAIEAARPYAVDVCSGVEAEKRKKDLRLVREFIEQVRVTK</sequence>
<feature type="chain" id="PRO_1000018647" description="N-(5'-phosphoribosyl)anthranilate isomerase">
    <location>
        <begin position="1"/>
        <end position="213"/>
    </location>
</feature>
<keyword id="KW-0028">Amino-acid biosynthesis</keyword>
<keyword id="KW-0057">Aromatic amino acid biosynthesis</keyword>
<keyword id="KW-0413">Isomerase</keyword>
<keyword id="KW-1185">Reference proteome</keyword>
<keyword id="KW-0822">Tryptophan biosynthesis</keyword>